<accession>P9WGL2</accession>
<accession>L0T881</accession>
<accession>P96372</accession>
<evidence type="ECO:0000250" key="1"/>
<evidence type="ECO:0000250" key="2">
    <source>
        <dbReference type="UniProtKB" id="P9WGL3"/>
    </source>
</evidence>
<evidence type="ECO:0000255" key="3"/>
<evidence type="ECO:0000255" key="4">
    <source>
        <dbReference type="PROSITE-ProRule" id="PRU00107"/>
    </source>
</evidence>
<evidence type="ECO:0000305" key="5"/>
<reference key="1">
    <citation type="journal article" date="2002" name="J. Bacteriol.">
        <title>Whole-genome comparison of Mycobacterium tuberculosis clinical and laboratory strains.</title>
        <authorList>
            <person name="Fleischmann R.D."/>
            <person name="Alland D."/>
            <person name="Eisen J.A."/>
            <person name="Carpenter L."/>
            <person name="White O."/>
            <person name="Peterson J.D."/>
            <person name="DeBoy R.T."/>
            <person name="Dodson R.J."/>
            <person name="Gwinn M.L."/>
            <person name="Haft D.H."/>
            <person name="Hickey E.K."/>
            <person name="Kolonay J.F."/>
            <person name="Nelson W.C."/>
            <person name="Umayam L.A."/>
            <person name="Ermolaeva M.D."/>
            <person name="Salzberg S.L."/>
            <person name="Delcher A."/>
            <person name="Utterback T.R."/>
            <person name="Weidman J.F."/>
            <person name="Khouri H.M."/>
            <person name="Gill J."/>
            <person name="Mikula A."/>
            <person name="Bishai W."/>
            <person name="Jacobs W.R. Jr."/>
            <person name="Venter J.C."/>
            <person name="Fraser C.M."/>
        </authorList>
    </citation>
    <scope>NUCLEOTIDE SEQUENCE [LARGE SCALE GENOMIC DNA]</scope>
    <source>
        <strain>CDC 1551 / Oshkosh</strain>
    </source>
</reference>
<feature type="chain" id="PRO_0000428342" description="Sensor protein KdpD">
    <location>
        <begin position="1"/>
        <end position="860"/>
    </location>
</feature>
<feature type="transmembrane region" description="Helical" evidence="3">
    <location>
        <begin position="397"/>
        <end position="417"/>
    </location>
</feature>
<feature type="transmembrane region" description="Helical" evidence="3">
    <location>
        <begin position="429"/>
        <end position="449"/>
    </location>
</feature>
<feature type="transmembrane region" description="Helical" evidence="3">
    <location>
        <begin position="477"/>
        <end position="497"/>
    </location>
</feature>
<feature type="transmembrane region" description="Helical" evidence="3">
    <location>
        <begin position="511"/>
        <end position="531"/>
    </location>
</feature>
<feature type="domain" description="Histidine kinase" evidence="4">
    <location>
        <begin position="639"/>
        <end position="857"/>
    </location>
</feature>
<feature type="modified residue" description="Phosphohistidine; by autocatalysis" evidence="4">
    <location>
        <position position="642"/>
    </location>
</feature>
<gene>
    <name type="primary">kdpD</name>
    <name type="ordered locus">MT1057</name>
</gene>
<protein>
    <recommendedName>
        <fullName>Sensor protein KdpD</fullName>
        <ecNumber evidence="2">2.7.13.3</ecNumber>
    </recommendedName>
</protein>
<organism>
    <name type="scientific">Mycobacterium tuberculosis (strain CDC 1551 / Oshkosh)</name>
    <dbReference type="NCBI Taxonomy" id="83331"/>
    <lineage>
        <taxon>Bacteria</taxon>
        <taxon>Bacillati</taxon>
        <taxon>Actinomycetota</taxon>
        <taxon>Actinomycetes</taxon>
        <taxon>Mycobacteriales</taxon>
        <taxon>Mycobacteriaceae</taxon>
        <taxon>Mycobacterium</taxon>
        <taxon>Mycobacterium tuberculosis complex</taxon>
    </lineage>
</organism>
<keyword id="KW-0067">ATP-binding</keyword>
<keyword id="KW-1003">Cell membrane</keyword>
<keyword id="KW-0418">Kinase</keyword>
<keyword id="KW-0472">Membrane</keyword>
<keyword id="KW-0547">Nucleotide-binding</keyword>
<keyword id="KW-0597">Phosphoprotein</keyword>
<keyword id="KW-1185">Reference proteome</keyword>
<keyword id="KW-0808">Transferase</keyword>
<keyword id="KW-0812">Transmembrane</keyword>
<keyword id="KW-1133">Transmembrane helix</keyword>
<keyword id="KW-0902">Two-component regulatory system</keyword>
<comment type="function">
    <text evidence="2">Member of the two-component regulatory system KdpD/KdpE involved in the regulation of the kdp operon. Functions as a sensor protein kinase which is autophosphorylated at a histidine residue and transfers its phosphate group to the conserved aspartic acid residue in the regulatory domain of KdpE in response to environmental signals such as low levels of potassium ion, osmotic imbalance, acid and nutrient stresses. In turn, KdpE binds to the upstream promoter regions of target genes to positively regulate their expression.</text>
</comment>
<comment type="catalytic activity">
    <reaction evidence="2">
        <text>ATP + protein L-histidine = ADP + protein N-phospho-L-histidine.</text>
        <dbReference type="EC" id="2.7.13.3"/>
    </reaction>
</comment>
<comment type="cofactor">
    <cofactor evidence="2">
        <name>Mg(2+)</name>
        <dbReference type="ChEBI" id="CHEBI:18420"/>
    </cofactor>
</comment>
<comment type="subcellular location">
    <subcellularLocation>
        <location evidence="1">Cell membrane</location>
        <topology evidence="1">Multi-pass membrane protein</topology>
    </subcellularLocation>
</comment>
<comment type="PTM">
    <text evidence="2">Autophosphorylated.</text>
</comment>
<comment type="similarity">
    <text evidence="5">In the central section; belongs to the universal stress protein A family.</text>
</comment>
<comment type="sequence caution" evidence="5">
    <conflict type="erroneous initiation">
        <sequence resource="EMBL-CDS" id="AAK45309"/>
    </conflict>
    <text>Extended N-terminus.</text>
</comment>
<proteinExistence type="inferred from homology"/>
<dbReference type="EC" id="2.7.13.3" evidence="2"/>
<dbReference type="EMBL" id="AE000516">
    <property type="protein sequence ID" value="AAK45309.1"/>
    <property type="status" value="ALT_INIT"/>
    <property type="molecule type" value="Genomic_DNA"/>
</dbReference>
<dbReference type="PIR" id="G70623">
    <property type="entry name" value="G70623"/>
</dbReference>
<dbReference type="RefSeq" id="WP_003898694.1">
    <property type="nucleotide sequence ID" value="NZ_KK341227.1"/>
</dbReference>
<dbReference type="SMR" id="P9WGL2"/>
<dbReference type="KEGG" id="mtc:MT1057"/>
<dbReference type="PATRIC" id="fig|83331.31.peg.1135"/>
<dbReference type="HOGENOM" id="CLU_000445_113_1_11"/>
<dbReference type="Proteomes" id="UP000001020">
    <property type="component" value="Chromosome"/>
</dbReference>
<dbReference type="GO" id="GO:0005886">
    <property type="term" value="C:plasma membrane"/>
    <property type="evidence" value="ECO:0007669"/>
    <property type="project" value="UniProtKB-SubCell"/>
</dbReference>
<dbReference type="GO" id="GO:0005524">
    <property type="term" value="F:ATP binding"/>
    <property type="evidence" value="ECO:0007669"/>
    <property type="project" value="UniProtKB-KW"/>
</dbReference>
<dbReference type="GO" id="GO:0000155">
    <property type="term" value="F:phosphorelay sensor kinase activity"/>
    <property type="evidence" value="ECO:0007669"/>
    <property type="project" value="InterPro"/>
</dbReference>
<dbReference type="CDD" id="cd00075">
    <property type="entry name" value="HATPase"/>
    <property type="match status" value="1"/>
</dbReference>
<dbReference type="CDD" id="cd00082">
    <property type="entry name" value="HisKA"/>
    <property type="match status" value="1"/>
</dbReference>
<dbReference type="CDD" id="cd01987">
    <property type="entry name" value="USP_KdpD-like"/>
    <property type="match status" value="1"/>
</dbReference>
<dbReference type="FunFam" id="1.10.287.130:FF:000021">
    <property type="entry name" value="Sensor histidine kinase KdpD"/>
    <property type="match status" value="1"/>
</dbReference>
<dbReference type="FunFam" id="1.20.120.620:FF:000006">
    <property type="entry name" value="Sensor histidine kinase KdpD"/>
    <property type="match status" value="1"/>
</dbReference>
<dbReference type="FunFam" id="3.40.50.300:FF:000483">
    <property type="entry name" value="Sensor histidine kinase KdpD"/>
    <property type="match status" value="1"/>
</dbReference>
<dbReference type="FunFam" id="3.40.50.620:FF:000112">
    <property type="entry name" value="Sensor histidine kinase KdpD"/>
    <property type="match status" value="1"/>
</dbReference>
<dbReference type="Gene3D" id="1.10.287.130">
    <property type="match status" value="1"/>
</dbReference>
<dbReference type="Gene3D" id="1.20.120.620">
    <property type="entry name" value="Backbone structure of the membrane domain of e. Coli histidine kinase receptor kdpd"/>
    <property type="match status" value="1"/>
</dbReference>
<dbReference type="Gene3D" id="3.30.565.10">
    <property type="entry name" value="Histidine kinase-like ATPase, C-terminal domain"/>
    <property type="match status" value="1"/>
</dbReference>
<dbReference type="Gene3D" id="3.40.50.620">
    <property type="entry name" value="HUPs"/>
    <property type="match status" value="1"/>
</dbReference>
<dbReference type="Gene3D" id="3.40.50.300">
    <property type="entry name" value="P-loop containing nucleotide triphosphate hydrolases"/>
    <property type="match status" value="1"/>
</dbReference>
<dbReference type="InterPro" id="IPR036890">
    <property type="entry name" value="HATPase_C_sf"/>
</dbReference>
<dbReference type="InterPro" id="IPR005467">
    <property type="entry name" value="His_kinase_dom"/>
</dbReference>
<dbReference type="InterPro" id="IPR003661">
    <property type="entry name" value="HisK_dim/P_dom"/>
</dbReference>
<dbReference type="InterPro" id="IPR036097">
    <property type="entry name" value="HisK_dim/P_sf"/>
</dbReference>
<dbReference type="InterPro" id="IPR052023">
    <property type="entry name" value="Histidine_kinase_KdpD"/>
</dbReference>
<dbReference type="InterPro" id="IPR038318">
    <property type="entry name" value="KdpD_sf"/>
</dbReference>
<dbReference type="InterPro" id="IPR025201">
    <property type="entry name" value="KdpD_TM"/>
</dbReference>
<dbReference type="InterPro" id="IPR027417">
    <property type="entry name" value="P-loop_NTPase"/>
</dbReference>
<dbReference type="InterPro" id="IPR014729">
    <property type="entry name" value="Rossmann-like_a/b/a_fold"/>
</dbReference>
<dbReference type="InterPro" id="IPR004358">
    <property type="entry name" value="Sig_transdc_His_kin-like_C"/>
</dbReference>
<dbReference type="InterPro" id="IPR003852">
    <property type="entry name" value="Sig_transdc_His_kinase_KdpD_N"/>
</dbReference>
<dbReference type="InterPro" id="IPR006016">
    <property type="entry name" value="UspA"/>
</dbReference>
<dbReference type="PANTHER" id="PTHR45569">
    <property type="entry name" value="SENSOR PROTEIN KDPD"/>
    <property type="match status" value="1"/>
</dbReference>
<dbReference type="PANTHER" id="PTHR45569:SF1">
    <property type="entry name" value="SENSOR PROTEIN KDPD"/>
    <property type="match status" value="1"/>
</dbReference>
<dbReference type="Pfam" id="PF13493">
    <property type="entry name" value="DUF4118"/>
    <property type="match status" value="1"/>
</dbReference>
<dbReference type="Pfam" id="PF02518">
    <property type="entry name" value="HATPase_c"/>
    <property type="match status" value="1"/>
</dbReference>
<dbReference type="Pfam" id="PF00512">
    <property type="entry name" value="HisKA"/>
    <property type="match status" value="1"/>
</dbReference>
<dbReference type="Pfam" id="PF02702">
    <property type="entry name" value="KdpD"/>
    <property type="match status" value="1"/>
</dbReference>
<dbReference type="Pfam" id="PF00582">
    <property type="entry name" value="Usp"/>
    <property type="match status" value="1"/>
</dbReference>
<dbReference type="PRINTS" id="PR00344">
    <property type="entry name" value="BCTRLSENSOR"/>
</dbReference>
<dbReference type="SMART" id="SM00387">
    <property type="entry name" value="HATPase_c"/>
    <property type="match status" value="1"/>
</dbReference>
<dbReference type="SMART" id="SM00388">
    <property type="entry name" value="HisKA"/>
    <property type="match status" value="1"/>
</dbReference>
<dbReference type="SUPFAM" id="SSF52402">
    <property type="entry name" value="Adenine nucleotide alpha hydrolases-like"/>
    <property type="match status" value="1"/>
</dbReference>
<dbReference type="SUPFAM" id="SSF55874">
    <property type="entry name" value="ATPase domain of HSP90 chaperone/DNA topoisomerase II/histidine kinase"/>
    <property type="match status" value="1"/>
</dbReference>
<dbReference type="SUPFAM" id="SSF47384">
    <property type="entry name" value="Homodimeric domain of signal transducing histidine kinase"/>
    <property type="match status" value="1"/>
</dbReference>
<dbReference type="SUPFAM" id="SSF52540">
    <property type="entry name" value="P-loop containing nucleoside triphosphate hydrolases"/>
    <property type="match status" value="1"/>
</dbReference>
<dbReference type="PROSITE" id="PS50109">
    <property type="entry name" value="HIS_KIN"/>
    <property type="match status" value="1"/>
</dbReference>
<sequence>MTLLFADLCAIFTPYRWMIEHVTTKRGQLRIYLGAAPGVGKTYAMLGEAHRRLERGTDVVAAVVETHGRNKTAKLLEGIEMIPPRYVEYRGARFPELDVEAVLRRHPQVVLVDELAHTNTPGSKNPKRWQDVQEILDAGITVISTVNIQHLEGLNDVVEQITGIEQKEKIPDEIVRAADQVELVDITPEALRRRLAHGNVYAAERVDAALSNYFRTGNLTALREIALLWLADQVDAALEKYRADKKITATWEARERVVVAVTGGPESETLVRRASRIASKSSAELMVVHVIRGDGLAGVSAPQLGRVRELATSLGATMHTVVGDDVPTALLDFAREMNATQLVVGTSRRSRWARLFDEGIGARTVQESGGIDVHMVTHPAASRASGWSRVSPRERHIASWLAALVVPSVICAITVAWLDRFMGIGGESALFFIGVLIVALLGGVAPAALSALLSGMLLNYFLTEPRYTWTIAEPDAAVTEFVLLAMAVAVAVLVDGAASRTREARRASQEAELLALFAGSVLRGADLATLLQRVRETYSQRAVTMLRVRQGASTGETVACVGTNPCRDVDSADTAIEVGDDEFWMLMAGRKLAARDRRVLTAVATQAAGLVKQRELAEEAGQAEAIARADELRRSLLSAVSHDLRTPLAAAKVAVSSLRTEDVAFSPEDTAELLATIEESIDQLTALVANLLDSSRLAAGVIRPQLRRAYLEEAVQRALVSIGKGATGFYRSGIDRVKVDVGDAVAMADAGLLERVLANLIDNALRYAPDCVVRVNAGRVRERVLINVIDEGPGVPRGTEEQLFAPFQRPGDHDNTTGVGLGMSVARGFVEAMGGTISATDTPGGGLTVVIDLAAPEDRP</sequence>
<name>KDPD_MYCTO</name>